<comment type="function">
    <text evidence="1">May be involved in transcriptional regulation as a transcriptional corepressor. The DEPDC1A-ZNF224 complex may play a critical role in bladder carcinogenesis by repressing the transcription of the A20 gene, leading to transport of NF-KB protein into the nucleus, resulting in suppression of apoptosis of bladder cancer cells (By similarity).</text>
</comment>
<comment type="subunit">
    <text evidence="1">Can form dimers. Interacts with ZNF224 (By similarity).</text>
</comment>
<comment type="subcellular location">
    <subcellularLocation>
        <location evidence="1">Nucleus</location>
    </subcellularLocation>
    <text evidence="1">Colocalizes with ZNF224 at the nucleus.</text>
</comment>
<comment type="alternative products">
    <event type="alternative splicing"/>
    <isoform>
        <id>Q8CIG0-1</id>
        <name>1</name>
        <sequence type="displayed"/>
    </isoform>
    <isoform>
        <id>Q8CIG0-2</id>
        <name>2</name>
        <sequence type="described" ref="VSP_024656 VSP_024657 VSP_024658"/>
    </isoform>
</comment>
<comment type="sequence caution" evidence="7">
    <conflict type="erroneous initiation">
        <sequence resource="EMBL-CDS" id="AAH05799"/>
    </conflict>
    <text>Truncated N-terminus.</text>
</comment>
<reference key="1">
    <citation type="journal article" date="2005" name="Science">
        <title>The transcriptional landscape of the mammalian genome.</title>
        <authorList>
            <person name="Carninci P."/>
            <person name="Kasukawa T."/>
            <person name="Katayama S."/>
            <person name="Gough J."/>
            <person name="Frith M.C."/>
            <person name="Maeda N."/>
            <person name="Oyama R."/>
            <person name="Ravasi T."/>
            <person name="Lenhard B."/>
            <person name="Wells C."/>
            <person name="Kodzius R."/>
            <person name="Shimokawa K."/>
            <person name="Bajic V.B."/>
            <person name="Brenner S.E."/>
            <person name="Batalov S."/>
            <person name="Forrest A.R."/>
            <person name="Zavolan M."/>
            <person name="Davis M.J."/>
            <person name="Wilming L.G."/>
            <person name="Aidinis V."/>
            <person name="Allen J.E."/>
            <person name="Ambesi-Impiombato A."/>
            <person name="Apweiler R."/>
            <person name="Aturaliya R.N."/>
            <person name="Bailey T.L."/>
            <person name="Bansal M."/>
            <person name="Baxter L."/>
            <person name="Beisel K.W."/>
            <person name="Bersano T."/>
            <person name="Bono H."/>
            <person name="Chalk A.M."/>
            <person name="Chiu K.P."/>
            <person name="Choudhary V."/>
            <person name="Christoffels A."/>
            <person name="Clutterbuck D.R."/>
            <person name="Crowe M.L."/>
            <person name="Dalla E."/>
            <person name="Dalrymple B.P."/>
            <person name="de Bono B."/>
            <person name="Della Gatta G."/>
            <person name="di Bernardo D."/>
            <person name="Down T."/>
            <person name="Engstrom P."/>
            <person name="Fagiolini M."/>
            <person name="Faulkner G."/>
            <person name="Fletcher C.F."/>
            <person name="Fukushima T."/>
            <person name="Furuno M."/>
            <person name="Futaki S."/>
            <person name="Gariboldi M."/>
            <person name="Georgii-Hemming P."/>
            <person name="Gingeras T.R."/>
            <person name="Gojobori T."/>
            <person name="Green R.E."/>
            <person name="Gustincich S."/>
            <person name="Harbers M."/>
            <person name="Hayashi Y."/>
            <person name="Hensch T.K."/>
            <person name="Hirokawa N."/>
            <person name="Hill D."/>
            <person name="Huminiecki L."/>
            <person name="Iacono M."/>
            <person name="Ikeo K."/>
            <person name="Iwama A."/>
            <person name="Ishikawa T."/>
            <person name="Jakt M."/>
            <person name="Kanapin A."/>
            <person name="Katoh M."/>
            <person name="Kawasawa Y."/>
            <person name="Kelso J."/>
            <person name="Kitamura H."/>
            <person name="Kitano H."/>
            <person name="Kollias G."/>
            <person name="Krishnan S.P."/>
            <person name="Kruger A."/>
            <person name="Kummerfeld S.K."/>
            <person name="Kurochkin I.V."/>
            <person name="Lareau L.F."/>
            <person name="Lazarevic D."/>
            <person name="Lipovich L."/>
            <person name="Liu J."/>
            <person name="Liuni S."/>
            <person name="McWilliam S."/>
            <person name="Madan Babu M."/>
            <person name="Madera M."/>
            <person name="Marchionni L."/>
            <person name="Matsuda H."/>
            <person name="Matsuzawa S."/>
            <person name="Miki H."/>
            <person name="Mignone F."/>
            <person name="Miyake S."/>
            <person name="Morris K."/>
            <person name="Mottagui-Tabar S."/>
            <person name="Mulder N."/>
            <person name="Nakano N."/>
            <person name="Nakauchi H."/>
            <person name="Ng P."/>
            <person name="Nilsson R."/>
            <person name="Nishiguchi S."/>
            <person name="Nishikawa S."/>
            <person name="Nori F."/>
            <person name="Ohara O."/>
            <person name="Okazaki Y."/>
            <person name="Orlando V."/>
            <person name="Pang K.C."/>
            <person name="Pavan W.J."/>
            <person name="Pavesi G."/>
            <person name="Pesole G."/>
            <person name="Petrovsky N."/>
            <person name="Piazza S."/>
            <person name="Reed J."/>
            <person name="Reid J.F."/>
            <person name="Ring B.Z."/>
            <person name="Ringwald M."/>
            <person name="Rost B."/>
            <person name="Ruan Y."/>
            <person name="Salzberg S.L."/>
            <person name="Sandelin A."/>
            <person name="Schneider C."/>
            <person name="Schoenbach C."/>
            <person name="Sekiguchi K."/>
            <person name="Semple C.A."/>
            <person name="Seno S."/>
            <person name="Sessa L."/>
            <person name="Sheng Y."/>
            <person name="Shibata Y."/>
            <person name="Shimada H."/>
            <person name="Shimada K."/>
            <person name="Silva D."/>
            <person name="Sinclair B."/>
            <person name="Sperling S."/>
            <person name="Stupka E."/>
            <person name="Sugiura K."/>
            <person name="Sultana R."/>
            <person name="Takenaka Y."/>
            <person name="Taki K."/>
            <person name="Tammoja K."/>
            <person name="Tan S.L."/>
            <person name="Tang S."/>
            <person name="Taylor M.S."/>
            <person name="Tegner J."/>
            <person name="Teichmann S.A."/>
            <person name="Ueda H.R."/>
            <person name="van Nimwegen E."/>
            <person name="Verardo R."/>
            <person name="Wei C.L."/>
            <person name="Yagi K."/>
            <person name="Yamanishi H."/>
            <person name="Zabarovsky E."/>
            <person name="Zhu S."/>
            <person name="Zimmer A."/>
            <person name="Hide W."/>
            <person name="Bult C."/>
            <person name="Grimmond S.M."/>
            <person name="Teasdale R.D."/>
            <person name="Liu E.T."/>
            <person name="Brusic V."/>
            <person name="Quackenbush J."/>
            <person name="Wahlestedt C."/>
            <person name="Mattick J.S."/>
            <person name="Hume D.A."/>
            <person name="Kai C."/>
            <person name="Sasaki D."/>
            <person name="Tomaru Y."/>
            <person name="Fukuda S."/>
            <person name="Kanamori-Katayama M."/>
            <person name="Suzuki M."/>
            <person name="Aoki J."/>
            <person name="Arakawa T."/>
            <person name="Iida J."/>
            <person name="Imamura K."/>
            <person name="Itoh M."/>
            <person name="Kato T."/>
            <person name="Kawaji H."/>
            <person name="Kawagashira N."/>
            <person name="Kawashima T."/>
            <person name="Kojima M."/>
            <person name="Kondo S."/>
            <person name="Konno H."/>
            <person name="Nakano K."/>
            <person name="Ninomiya N."/>
            <person name="Nishio T."/>
            <person name="Okada M."/>
            <person name="Plessy C."/>
            <person name="Shibata K."/>
            <person name="Shiraki T."/>
            <person name="Suzuki S."/>
            <person name="Tagami M."/>
            <person name="Waki K."/>
            <person name="Watahiki A."/>
            <person name="Okamura-Oho Y."/>
            <person name="Suzuki H."/>
            <person name="Kawai J."/>
            <person name="Hayashizaki Y."/>
        </authorList>
    </citation>
    <scope>NUCLEOTIDE SEQUENCE [LARGE SCALE MRNA] (ISOFORM 2)</scope>
    <source>
        <strain>C57BL/6J</strain>
        <strain>NOD</strain>
        <tissue>Liver</tissue>
        <tissue>Thymus</tissue>
    </source>
</reference>
<reference key="2">
    <citation type="journal article" date="2004" name="Genome Res.">
        <title>The status, quality, and expansion of the NIH full-length cDNA project: the Mammalian Gene Collection (MGC).</title>
        <authorList>
            <consortium name="The MGC Project Team"/>
        </authorList>
    </citation>
    <scope>NUCLEOTIDE SEQUENCE [LARGE SCALE MRNA] (ISOFORM 1)</scope>
    <scope>NUCLEOTIDE SEQUENCE [LARGE SCALE MRNA] OF 532-804 (ISOFORM 2)</scope>
    <source>
        <strain>FVB/N</strain>
        <tissue>Mammary tumor</tissue>
    </source>
</reference>
<reference key="3">
    <citation type="submission" date="2009-01" db="UniProtKB">
        <authorList>
            <person name="Lubec G."/>
            <person name="Sunyer B."/>
            <person name="Chen W.-Q."/>
        </authorList>
    </citation>
    <scope>PROTEIN SEQUENCE OF 354-364</scope>
    <scope>IDENTIFICATION BY MASS SPECTROMETRY</scope>
    <source>
        <strain>OF1</strain>
        <tissue>Hippocampus</tissue>
    </source>
</reference>
<sequence length="804" mass="92201">MERQGAPLGPYRATKLWNEVTTSFRVGMPLRKHRQHLKKYSNCFTAVEAIDWLYDLLRSNSNFGPEVTRQQTIQLLRKFLKNHVIEDIKGRWGSESLDDNNQLFRFPATSPLKTFPQRHTEIKKTNTEYFSKDKDGIFKLRNLSQKTSKKRGLHFSQENTEKINHERITNEDLEIAPDNQEISQEDVEEVWRYVIMIYLQTILSLPSIEELLNPNQVIPQYIMYNMANTSKHGVVILQDKSDDLPHWVLSAMKCLANWPRSNDTNNLTYVGFERDVFKTIADYFLNLPEPLLTFEYYELFVNILVVCGYITVSDRTSGIHKIQDDPRSSKIHDLSNLNSFKSTECLLLSLLYKDKSNEELDSTKRLQRNDQGFQERCAKKMQLDNLRNRRASANDIMGGSCHNLIGLSNTNALSSNIKPRCSSLEGIVDRPVNSSEKKSSIFYQSVLNIEEQNSKQSLVSAPKQTPLFNLHSDENAQQPHCVGFNRTSALTVQDQEELCNEKYKSKQLCRSQSLLLRSSTRQNSCINKPVAEIIMKPNVGQGSTSELGESSTTINKRLCKSTIELSEKSLPPAASVLTGTQSLLQPHLERVAINALQLCCLLLPPPNRRKLQLLMRMISRMSQNVDMPKLHEQIGTRSLMINTFSRCVLCCAEEVDLDELLASRLVSFLMDHHQEILQVPTYLQAAVEKHLDYIKKGNVKNHGDGLVVPLPTYSYCKQISAKEFDEQKISTSQAAIAELLENIVRSKSLSLKEKRRKLKQKEYPLIYQKRFPTTESEAALFDDKPTIKQPMLNLRNPKLHSLRY</sequence>
<gene>
    <name type="primary">Depdc1a</name>
</gene>
<name>DEP1A_MOUSE</name>
<evidence type="ECO:0000250" key="1"/>
<evidence type="ECO:0000250" key="2">
    <source>
        <dbReference type="UniProtKB" id="Q5TB30"/>
    </source>
</evidence>
<evidence type="ECO:0000255" key="3"/>
<evidence type="ECO:0000255" key="4">
    <source>
        <dbReference type="PROSITE-ProRule" id="PRU00066"/>
    </source>
</evidence>
<evidence type="ECO:0000303" key="5">
    <source>
    </source>
</evidence>
<evidence type="ECO:0000303" key="6">
    <source>
    </source>
</evidence>
<evidence type="ECO:0000305" key="7"/>
<feature type="chain" id="PRO_0000284787" description="DEP domain-containing protein 1A">
    <location>
        <begin position="1"/>
        <end position="804"/>
    </location>
</feature>
<feature type="domain" description="DEP" evidence="4">
    <location>
        <begin position="24"/>
        <end position="108"/>
    </location>
</feature>
<feature type="domain" description="Rho-GAP">
    <location>
        <begin position="282"/>
        <end position="322"/>
    </location>
</feature>
<feature type="region of interest" description="Interaction with ZNF224" evidence="1">
    <location>
        <begin position="592"/>
        <end position="647"/>
    </location>
</feature>
<feature type="coiled-coil region" evidence="3">
    <location>
        <begin position="726"/>
        <end position="760"/>
    </location>
</feature>
<feature type="modified residue" description="Phosphoserine" evidence="2">
    <location>
        <position position="513"/>
    </location>
</feature>
<feature type="splice variant" id="VSP_024656" description="In isoform 2." evidence="5 6">
    <original>V</original>
    <variation>G</variation>
    <location>
        <position position="305"/>
    </location>
</feature>
<feature type="splice variant" id="VSP_024657" description="In isoform 2." evidence="5 6">
    <location>
        <begin position="306"/>
        <end position="582"/>
    </location>
</feature>
<feature type="splice variant" id="VSP_024658" description="In isoform 2." evidence="5 6">
    <original>Q</original>
    <variation>QFQ</variation>
    <location>
        <position position="760"/>
    </location>
</feature>
<proteinExistence type="evidence at protein level"/>
<dbReference type="EMBL" id="AK050456">
    <property type="protein sequence ID" value="BAC34267.1"/>
    <property type="molecule type" value="mRNA"/>
</dbReference>
<dbReference type="EMBL" id="AK088719">
    <property type="protein sequence ID" value="BAC40526.1"/>
    <property type="molecule type" value="mRNA"/>
</dbReference>
<dbReference type="EMBL" id="BC005799">
    <property type="protein sequence ID" value="AAH05799.1"/>
    <property type="status" value="ALT_INIT"/>
    <property type="molecule type" value="mRNA"/>
</dbReference>
<dbReference type="EMBL" id="BC023934">
    <property type="protein sequence ID" value="AAH23934.1"/>
    <property type="molecule type" value="mRNA"/>
</dbReference>
<dbReference type="CCDS" id="CCDS17936.1">
    <molecule id="Q8CIG0-1"/>
</dbReference>
<dbReference type="CCDS" id="CCDS51106.1">
    <molecule id="Q8CIG0-2"/>
</dbReference>
<dbReference type="RefSeq" id="NP_001165563.1">
    <property type="nucleotide sequence ID" value="NM_001172092.1"/>
</dbReference>
<dbReference type="RefSeq" id="NP_001165564.1">
    <molecule id="Q8CIG0-2"/>
    <property type="nucleotide sequence ID" value="NM_001172093.1"/>
</dbReference>
<dbReference type="RefSeq" id="NP_083799.2">
    <molecule id="Q8CIG0-1"/>
    <property type="nucleotide sequence ID" value="NM_029523.3"/>
</dbReference>
<dbReference type="SMR" id="Q8CIG0"/>
<dbReference type="FunCoup" id="Q8CIG0">
    <property type="interactions" value="807"/>
</dbReference>
<dbReference type="STRING" id="10090.ENSMUSP00000113216"/>
<dbReference type="iPTMnet" id="Q8CIG0"/>
<dbReference type="PhosphoSitePlus" id="Q8CIG0"/>
<dbReference type="jPOST" id="Q8CIG0"/>
<dbReference type="PaxDb" id="10090-ENSMUSP00000113216"/>
<dbReference type="ProteomicsDB" id="279374">
    <molecule id="Q8CIG0-1"/>
</dbReference>
<dbReference type="ProteomicsDB" id="279375">
    <molecule id="Q8CIG0-2"/>
</dbReference>
<dbReference type="Antibodypedia" id="33419">
    <property type="antibodies" value="140 antibodies from 20 providers"/>
</dbReference>
<dbReference type="DNASU" id="76131"/>
<dbReference type="Ensembl" id="ENSMUST00000029825.14">
    <molecule id="Q8CIG0-1"/>
    <property type="protein sequence ID" value="ENSMUSP00000029825.8"/>
    <property type="gene ID" value="ENSMUSG00000028175.16"/>
</dbReference>
<dbReference type="Ensembl" id="ENSMUST00000106041.3">
    <molecule id="Q8CIG0-2"/>
    <property type="protein sequence ID" value="ENSMUSP00000101656.3"/>
    <property type="gene ID" value="ENSMUSG00000028175.16"/>
</dbReference>
<dbReference type="GeneID" id="76131"/>
<dbReference type="KEGG" id="mmu:76131"/>
<dbReference type="UCSC" id="uc008rvy.2">
    <molecule id="Q8CIG0-1"/>
    <property type="organism name" value="mouse"/>
</dbReference>
<dbReference type="UCSC" id="uc008rwa.2">
    <molecule id="Q8CIG0-2"/>
    <property type="organism name" value="mouse"/>
</dbReference>
<dbReference type="AGR" id="MGI:1923381"/>
<dbReference type="CTD" id="76131"/>
<dbReference type="MGI" id="MGI:1923381">
    <property type="gene designation" value="Depdc1a"/>
</dbReference>
<dbReference type="VEuPathDB" id="HostDB:ENSMUSG00000028175"/>
<dbReference type="eggNOG" id="ENOG502QR00">
    <property type="taxonomic scope" value="Eukaryota"/>
</dbReference>
<dbReference type="GeneTree" id="ENSGT00950000182976"/>
<dbReference type="HOGENOM" id="CLU_040757_0_0_1"/>
<dbReference type="InParanoid" id="Q8CIG0"/>
<dbReference type="OMA" id="HRRHMRT"/>
<dbReference type="OrthoDB" id="524326at2759"/>
<dbReference type="PhylomeDB" id="Q8CIG0"/>
<dbReference type="BioGRID-ORCS" id="76131">
    <property type="hits" value="1 hit in 78 CRISPR screens"/>
</dbReference>
<dbReference type="PRO" id="PR:Q8CIG0"/>
<dbReference type="Proteomes" id="UP000000589">
    <property type="component" value="Chromosome 3"/>
</dbReference>
<dbReference type="RNAct" id="Q8CIG0">
    <property type="molecule type" value="protein"/>
</dbReference>
<dbReference type="Bgee" id="ENSMUSG00000028175">
    <property type="expression patterns" value="Expressed in undifferentiated genital tubercle and 56 other cell types or tissues"/>
</dbReference>
<dbReference type="ExpressionAtlas" id="Q8CIG0">
    <property type="expression patterns" value="baseline and differential"/>
</dbReference>
<dbReference type="GO" id="GO:0005634">
    <property type="term" value="C:nucleus"/>
    <property type="evidence" value="ECO:0000250"/>
    <property type="project" value="UniProtKB"/>
</dbReference>
<dbReference type="GO" id="GO:0017053">
    <property type="term" value="C:transcription repressor complex"/>
    <property type="evidence" value="ECO:0000250"/>
    <property type="project" value="UniProtKB"/>
</dbReference>
<dbReference type="GO" id="GO:0005096">
    <property type="term" value="F:GTPase activator activity"/>
    <property type="evidence" value="ECO:0007669"/>
    <property type="project" value="UniProtKB-KW"/>
</dbReference>
<dbReference type="GO" id="GO:0035556">
    <property type="term" value="P:intracellular signal transduction"/>
    <property type="evidence" value="ECO:0007669"/>
    <property type="project" value="InterPro"/>
</dbReference>
<dbReference type="GO" id="GO:0045892">
    <property type="term" value="P:negative regulation of DNA-templated transcription"/>
    <property type="evidence" value="ECO:0000250"/>
    <property type="project" value="UniProtKB"/>
</dbReference>
<dbReference type="CDD" id="cd04405">
    <property type="entry name" value="RhoGAP_BRCC3-like"/>
    <property type="match status" value="1"/>
</dbReference>
<dbReference type="FunFam" id="1.10.555.10:FF:000038">
    <property type="entry name" value="DEP domain-containing protein 1A isoform X1"/>
    <property type="match status" value="1"/>
</dbReference>
<dbReference type="FunFam" id="1.10.10.10:FF:000182">
    <property type="entry name" value="DEP domain-containing protein 1B isoform 1"/>
    <property type="match status" value="1"/>
</dbReference>
<dbReference type="Gene3D" id="1.10.555.10">
    <property type="entry name" value="Rho GTPase activation protein"/>
    <property type="match status" value="1"/>
</dbReference>
<dbReference type="Gene3D" id="1.10.10.10">
    <property type="entry name" value="Winged helix-like DNA-binding domain superfamily/Winged helix DNA-binding domain"/>
    <property type="match status" value="1"/>
</dbReference>
<dbReference type="InterPro" id="IPR000591">
    <property type="entry name" value="DEP_dom"/>
</dbReference>
<dbReference type="InterPro" id="IPR008936">
    <property type="entry name" value="Rho_GTPase_activation_prot"/>
</dbReference>
<dbReference type="InterPro" id="IPR036388">
    <property type="entry name" value="WH-like_DNA-bd_sf"/>
</dbReference>
<dbReference type="InterPro" id="IPR036390">
    <property type="entry name" value="WH_DNA-bd_sf"/>
</dbReference>
<dbReference type="PANTHER" id="PTHR16206">
    <property type="entry name" value="DEP DOMAIN-CONTAINING"/>
    <property type="match status" value="1"/>
</dbReference>
<dbReference type="PANTHER" id="PTHR16206:SF12">
    <property type="entry name" value="DEP DOMAIN-CONTAINING PROTEIN 1A"/>
    <property type="match status" value="1"/>
</dbReference>
<dbReference type="Pfam" id="PF00610">
    <property type="entry name" value="DEP"/>
    <property type="match status" value="1"/>
</dbReference>
<dbReference type="SMART" id="SM00049">
    <property type="entry name" value="DEP"/>
    <property type="match status" value="1"/>
</dbReference>
<dbReference type="SUPFAM" id="SSF48350">
    <property type="entry name" value="GTPase activation domain, GAP"/>
    <property type="match status" value="1"/>
</dbReference>
<dbReference type="SUPFAM" id="SSF46785">
    <property type="entry name" value="Winged helix' DNA-binding domain"/>
    <property type="match status" value="1"/>
</dbReference>
<dbReference type="PROSITE" id="PS50186">
    <property type="entry name" value="DEP"/>
    <property type="match status" value="1"/>
</dbReference>
<organism>
    <name type="scientific">Mus musculus</name>
    <name type="common">Mouse</name>
    <dbReference type="NCBI Taxonomy" id="10090"/>
    <lineage>
        <taxon>Eukaryota</taxon>
        <taxon>Metazoa</taxon>
        <taxon>Chordata</taxon>
        <taxon>Craniata</taxon>
        <taxon>Vertebrata</taxon>
        <taxon>Euteleostomi</taxon>
        <taxon>Mammalia</taxon>
        <taxon>Eutheria</taxon>
        <taxon>Euarchontoglires</taxon>
        <taxon>Glires</taxon>
        <taxon>Rodentia</taxon>
        <taxon>Myomorpha</taxon>
        <taxon>Muroidea</taxon>
        <taxon>Muridae</taxon>
        <taxon>Murinae</taxon>
        <taxon>Mus</taxon>
        <taxon>Mus</taxon>
    </lineage>
</organism>
<keyword id="KW-0025">Alternative splicing</keyword>
<keyword id="KW-0175">Coiled coil</keyword>
<keyword id="KW-0903">Direct protein sequencing</keyword>
<keyword id="KW-0343">GTPase activation</keyword>
<keyword id="KW-0539">Nucleus</keyword>
<keyword id="KW-0597">Phosphoprotein</keyword>
<keyword id="KW-1185">Reference proteome</keyword>
<keyword id="KW-0678">Repressor</keyword>
<keyword id="KW-0804">Transcription</keyword>
<keyword id="KW-0805">Transcription regulation</keyword>
<accession>Q8CIG0</accession>
<accession>Q8BHF1</accession>
<accession>Q99JN3</accession>
<protein>
    <recommendedName>
        <fullName>DEP domain-containing protein 1A</fullName>
    </recommendedName>
</protein>